<comment type="function">
    <text evidence="1">Chemotactic-signal transducers respond to changes in the concentration of attractants and repellents in the environment, transduce a signal from the outside to the inside of the cell, and facilitate sensory adaptation through the variation of the level of methylation.</text>
</comment>
<comment type="subcellular location">
    <subcellularLocation>
        <location evidence="5">Cell membrane</location>
        <topology evidence="5">Multi-pass membrane protein</topology>
    </subcellularLocation>
</comment>
<comment type="similarity">
    <text evidence="5">Belongs to the methyl-accepting chemotaxis (MCP) protein family.</text>
</comment>
<gene>
    <name type="ordered locus">BT9727_0355</name>
</gene>
<organism>
    <name type="scientific">Bacillus thuringiensis subsp. konkukian (strain 97-27)</name>
    <dbReference type="NCBI Taxonomy" id="281309"/>
    <lineage>
        <taxon>Bacteria</taxon>
        <taxon>Bacillati</taxon>
        <taxon>Bacillota</taxon>
        <taxon>Bacilli</taxon>
        <taxon>Bacillales</taxon>
        <taxon>Bacillaceae</taxon>
        <taxon>Bacillus</taxon>
        <taxon>Bacillus cereus group</taxon>
    </lineage>
</organism>
<feature type="chain" id="PRO_0000394196" description="Probable methyl-accepting chemotaxis protein BT9727_0355">
    <location>
        <begin position="1"/>
        <end position="579"/>
    </location>
</feature>
<feature type="topological domain" description="Cytoplasmic" evidence="2">
    <location>
        <begin position="1"/>
        <end position="13"/>
    </location>
</feature>
<feature type="transmembrane region" description="Helical" evidence="2">
    <location>
        <begin position="14"/>
        <end position="34"/>
    </location>
</feature>
<feature type="topological domain" description="Extracellular" evidence="2">
    <location>
        <begin position="35"/>
        <end position="198"/>
    </location>
</feature>
<feature type="transmembrane region" description="Helical" evidence="2">
    <location>
        <begin position="199"/>
        <end position="219"/>
    </location>
</feature>
<feature type="topological domain" description="Cytoplasmic" evidence="2">
    <location>
        <begin position="220"/>
        <end position="579"/>
    </location>
</feature>
<feature type="domain" description="HAMP" evidence="3">
    <location>
        <begin position="223"/>
        <end position="274"/>
    </location>
</feature>
<feature type="domain" description="Methyl-accepting transducer" evidence="4">
    <location>
        <begin position="293"/>
        <end position="529"/>
    </location>
</feature>
<feature type="modified residue" description="Glutamate methyl ester (Glu)" evidence="1">
    <location>
        <position position="289"/>
    </location>
</feature>
<feature type="modified residue" description="Glutamate methyl ester (Glu)" evidence="1">
    <location>
        <position position="548"/>
    </location>
</feature>
<dbReference type="EMBL" id="AE017355">
    <property type="protein sequence ID" value="AAT61241.1"/>
    <property type="molecule type" value="Genomic_DNA"/>
</dbReference>
<dbReference type="RefSeq" id="WP_000761099.1">
    <property type="nucleotide sequence ID" value="NC_005957.1"/>
</dbReference>
<dbReference type="RefSeq" id="YP_034705.1">
    <property type="nucleotide sequence ID" value="NC_005957.1"/>
</dbReference>
<dbReference type="SMR" id="Q6HP15"/>
<dbReference type="KEGG" id="btk:BT9727_0355"/>
<dbReference type="PATRIC" id="fig|281309.8.peg.377"/>
<dbReference type="HOGENOM" id="CLU_000445_107_19_9"/>
<dbReference type="Proteomes" id="UP000001301">
    <property type="component" value="Chromosome"/>
</dbReference>
<dbReference type="GO" id="GO:0005886">
    <property type="term" value="C:plasma membrane"/>
    <property type="evidence" value="ECO:0007669"/>
    <property type="project" value="UniProtKB-SubCell"/>
</dbReference>
<dbReference type="GO" id="GO:0004888">
    <property type="term" value="F:transmembrane signaling receptor activity"/>
    <property type="evidence" value="ECO:0007669"/>
    <property type="project" value="InterPro"/>
</dbReference>
<dbReference type="GO" id="GO:0006935">
    <property type="term" value="P:chemotaxis"/>
    <property type="evidence" value="ECO:0007669"/>
    <property type="project" value="UniProtKB-KW"/>
</dbReference>
<dbReference type="GO" id="GO:0007165">
    <property type="term" value="P:signal transduction"/>
    <property type="evidence" value="ECO:0007669"/>
    <property type="project" value="UniProtKB-KW"/>
</dbReference>
<dbReference type="CDD" id="cd06225">
    <property type="entry name" value="HAMP"/>
    <property type="match status" value="1"/>
</dbReference>
<dbReference type="CDD" id="cd11386">
    <property type="entry name" value="MCP_signal"/>
    <property type="match status" value="1"/>
</dbReference>
<dbReference type="CDD" id="cd18773">
    <property type="entry name" value="PDC1_HK_sensor"/>
    <property type="match status" value="1"/>
</dbReference>
<dbReference type="Gene3D" id="1.10.287.950">
    <property type="entry name" value="Methyl-accepting chemotaxis protein"/>
    <property type="match status" value="1"/>
</dbReference>
<dbReference type="InterPro" id="IPR004090">
    <property type="entry name" value="Chemotax_Me-accpt_rcpt"/>
</dbReference>
<dbReference type="InterPro" id="IPR003660">
    <property type="entry name" value="HAMP_dom"/>
</dbReference>
<dbReference type="InterPro" id="IPR004089">
    <property type="entry name" value="MCPsignal_dom"/>
</dbReference>
<dbReference type="PANTHER" id="PTHR32089">
    <property type="entry name" value="METHYL-ACCEPTING CHEMOTAXIS PROTEIN MCPB"/>
    <property type="match status" value="1"/>
</dbReference>
<dbReference type="PANTHER" id="PTHR32089:SF114">
    <property type="entry name" value="METHYL-ACCEPTING CHEMOTAXIS PROTEIN MCPB"/>
    <property type="match status" value="1"/>
</dbReference>
<dbReference type="Pfam" id="PF00672">
    <property type="entry name" value="HAMP"/>
    <property type="match status" value="1"/>
</dbReference>
<dbReference type="Pfam" id="PF00015">
    <property type="entry name" value="MCPsignal"/>
    <property type="match status" value="1"/>
</dbReference>
<dbReference type="PRINTS" id="PR00260">
    <property type="entry name" value="CHEMTRNSDUCR"/>
</dbReference>
<dbReference type="SMART" id="SM00304">
    <property type="entry name" value="HAMP"/>
    <property type="match status" value="3"/>
</dbReference>
<dbReference type="SMART" id="SM00283">
    <property type="entry name" value="MA"/>
    <property type="match status" value="1"/>
</dbReference>
<dbReference type="SUPFAM" id="SSF58104">
    <property type="entry name" value="Methyl-accepting chemotaxis protein (MCP) signaling domain"/>
    <property type="match status" value="1"/>
</dbReference>
<dbReference type="PROSITE" id="PS50111">
    <property type="entry name" value="CHEMOTAXIS_TRANSDUC_2"/>
    <property type="match status" value="1"/>
</dbReference>
<dbReference type="PROSITE" id="PS50885">
    <property type="entry name" value="HAMP"/>
    <property type="match status" value="1"/>
</dbReference>
<reference key="1">
    <citation type="journal article" date="2006" name="J. Bacteriol.">
        <title>Pathogenomic sequence analysis of Bacillus cereus and Bacillus thuringiensis isolates closely related to Bacillus anthracis.</title>
        <authorList>
            <person name="Han C.S."/>
            <person name="Xie G."/>
            <person name="Challacombe J.F."/>
            <person name="Altherr M.R."/>
            <person name="Bhotika S.S."/>
            <person name="Bruce D."/>
            <person name="Campbell C.S."/>
            <person name="Campbell M.L."/>
            <person name="Chen J."/>
            <person name="Chertkov O."/>
            <person name="Cleland C."/>
            <person name="Dimitrijevic M."/>
            <person name="Doggett N.A."/>
            <person name="Fawcett J.J."/>
            <person name="Glavina T."/>
            <person name="Goodwin L.A."/>
            <person name="Hill K.K."/>
            <person name="Hitchcock P."/>
            <person name="Jackson P.J."/>
            <person name="Keim P."/>
            <person name="Kewalramani A.R."/>
            <person name="Longmire J."/>
            <person name="Lucas S."/>
            <person name="Malfatti S."/>
            <person name="McMurry K."/>
            <person name="Meincke L.J."/>
            <person name="Misra M."/>
            <person name="Moseman B.L."/>
            <person name="Mundt M."/>
            <person name="Munk A.C."/>
            <person name="Okinaka R.T."/>
            <person name="Parson-Quintana B."/>
            <person name="Reilly L.P."/>
            <person name="Richardson P."/>
            <person name="Robinson D.L."/>
            <person name="Rubin E."/>
            <person name="Saunders E."/>
            <person name="Tapia R."/>
            <person name="Tesmer J.G."/>
            <person name="Thayer N."/>
            <person name="Thompson L.S."/>
            <person name="Tice H."/>
            <person name="Ticknor L.O."/>
            <person name="Wills P.L."/>
            <person name="Brettin T.S."/>
            <person name="Gilna P."/>
        </authorList>
    </citation>
    <scope>NUCLEOTIDE SEQUENCE [LARGE SCALE GENOMIC DNA]</scope>
    <source>
        <strain>97-27</strain>
    </source>
</reference>
<proteinExistence type="inferred from homology"/>
<sequence>MKKYWHKLSFLQKNVLLTVLVILTLVGTMGALSFNMFQNSMMSIFERHSFETGDTVLHKLDEEIVRDVTKDPVAQREKREKLTEKLDEATEELNSVGQTYIVGAKKNEKGELLIVDLSTDLANVVEVRPGEYYKQPDLWMEAYDKVMSTKKANMTVVYEDLLGTWVTILEPIKDGEGNIVAIVAADVDASIVPSTKEKFIIQGLMFICISVLIATVIQFLIVRNALAPLRDLREGLRRVGEGDLNIKLEERSDDIGIINSYFNNTIEKFKGIIDKVKQTAEQVSSSSQELSVSTKENSMAVQEIVSSMVELRAGAQLQETSVPQYLGIVYEVEDKMEEITNAAKQMEKVSEGIEHHSVKGNGVTKQAINQMNIIQNAVQDLSSIIYSLEVRSKEISDIVTVITSISNQTNSLALHATIEASRAEETGEGFAVVADEVRKLAEQMEASAKDIANLIGETQAGTEEAVVSIRKASKEVESGMKLVEMNGAFFEEISKSAQSVTNQVRVVSSNSSDILQNSQNIVRVVNELSLIANTYTNSSSNVEESMKEQEMSVQDIAELASSLSWLSQELQELIGEFKS</sequence>
<keyword id="KW-1003">Cell membrane</keyword>
<keyword id="KW-0145">Chemotaxis</keyword>
<keyword id="KW-0472">Membrane</keyword>
<keyword id="KW-0488">Methylation</keyword>
<keyword id="KW-0807">Transducer</keyword>
<keyword id="KW-0812">Transmembrane</keyword>
<keyword id="KW-1133">Transmembrane helix</keyword>
<name>Y355_BACHK</name>
<evidence type="ECO:0000250" key="1"/>
<evidence type="ECO:0000255" key="2"/>
<evidence type="ECO:0000255" key="3">
    <source>
        <dbReference type="PROSITE-ProRule" id="PRU00102"/>
    </source>
</evidence>
<evidence type="ECO:0000255" key="4">
    <source>
        <dbReference type="PROSITE-ProRule" id="PRU00284"/>
    </source>
</evidence>
<evidence type="ECO:0000305" key="5"/>
<accession>Q6HP15</accession>
<protein>
    <recommendedName>
        <fullName>Probable methyl-accepting chemotaxis protein BT9727_0355</fullName>
    </recommendedName>
</protein>